<reference key="1">
    <citation type="journal article" date="2010" name="PLoS ONE">
        <title>Genome sequence of Cronobacter sakazakii BAA-894 and comparative genomic hybridization analysis with other Cronobacter species.</title>
        <authorList>
            <person name="Kucerova E."/>
            <person name="Clifton S.W."/>
            <person name="Xia X.Q."/>
            <person name="Long F."/>
            <person name="Porwollik S."/>
            <person name="Fulton L."/>
            <person name="Fronick C."/>
            <person name="Minx P."/>
            <person name="Kyung K."/>
            <person name="Warren W."/>
            <person name="Fulton R."/>
            <person name="Feng D."/>
            <person name="Wollam A."/>
            <person name="Shah N."/>
            <person name="Bhonagiri V."/>
            <person name="Nash W.E."/>
            <person name="Hallsworth-Pepin K."/>
            <person name="Wilson R.K."/>
            <person name="McClelland M."/>
            <person name="Forsythe S.J."/>
        </authorList>
    </citation>
    <scope>NUCLEOTIDE SEQUENCE [LARGE SCALE GENOMIC DNA]</scope>
    <source>
        <strain>ATCC BAA-894</strain>
    </source>
</reference>
<sequence length="67" mass="7550">MMSDATIVNCPTCGKEVIWGEKSPFRPFCSKRCQLIDLGEWAAEEKRIPSSGDRSDTDGWSEEENQP</sequence>
<gene>
    <name evidence="1" type="primary">yacG</name>
    <name type="ordered locus">ESA_03238</name>
</gene>
<accession>A7MQ61</accession>
<evidence type="ECO:0000255" key="1">
    <source>
        <dbReference type="HAMAP-Rule" id="MF_00649"/>
    </source>
</evidence>
<evidence type="ECO:0000256" key="2">
    <source>
        <dbReference type="SAM" id="MobiDB-lite"/>
    </source>
</evidence>
<dbReference type="EMBL" id="CP000783">
    <property type="protein sequence ID" value="ABU78460.1"/>
    <property type="molecule type" value="Genomic_DNA"/>
</dbReference>
<dbReference type="SMR" id="A7MQ61"/>
<dbReference type="KEGG" id="esa:ESA_03238"/>
<dbReference type="HOGENOM" id="CLU_178280_3_1_6"/>
<dbReference type="Proteomes" id="UP000000260">
    <property type="component" value="Chromosome"/>
</dbReference>
<dbReference type="GO" id="GO:0008657">
    <property type="term" value="F:DNA topoisomerase type II (double strand cut, ATP-hydrolyzing) inhibitor activity"/>
    <property type="evidence" value="ECO:0007669"/>
    <property type="project" value="UniProtKB-UniRule"/>
</dbReference>
<dbReference type="GO" id="GO:0008270">
    <property type="term" value="F:zinc ion binding"/>
    <property type="evidence" value="ECO:0007669"/>
    <property type="project" value="UniProtKB-UniRule"/>
</dbReference>
<dbReference type="GO" id="GO:0006355">
    <property type="term" value="P:regulation of DNA-templated transcription"/>
    <property type="evidence" value="ECO:0007669"/>
    <property type="project" value="InterPro"/>
</dbReference>
<dbReference type="Gene3D" id="3.30.50.10">
    <property type="entry name" value="Erythroid Transcription Factor GATA-1, subunit A"/>
    <property type="match status" value="1"/>
</dbReference>
<dbReference type="HAMAP" id="MF_00649">
    <property type="entry name" value="DNA_gyrase_inhibitor_YacG"/>
    <property type="match status" value="1"/>
</dbReference>
<dbReference type="InterPro" id="IPR005584">
    <property type="entry name" value="DNA_gyrase_inhibitor_YacG"/>
</dbReference>
<dbReference type="InterPro" id="IPR013088">
    <property type="entry name" value="Znf_NHR/GATA"/>
</dbReference>
<dbReference type="NCBIfam" id="NF001638">
    <property type="entry name" value="PRK00418.1"/>
    <property type="match status" value="1"/>
</dbReference>
<dbReference type="PANTHER" id="PTHR36150">
    <property type="entry name" value="DNA GYRASE INHIBITOR YACG"/>
    <property type="match status" value="1"/>
</dbReference>
<dbReference type="PANTHER" id="PTHR36150:SF1">
    <property type="entry name" value="DNA GYRASE INHIBITOR YACG"/>
    <property type="match status" value="1"/>
</dbReference>
<dbReference type="Pfam" id="PF03884">
    <property type="entry name" value="YacG"/>
    <property type="match status" value="1"/>
</dbReference>
<dbReference type="SUPFAM" id="SSF57716">
    <property type="entry name" value="Glucocorticoid receptor-like (DNA-binding domain)"/>
    <property type="match status" value="1"/>
</dbReference>
<proteinExistence type="inferred from homology"/>
<keyword id="KW-0479">Metal-binding</keyword>
<keyword id="KW-1185">Reference proteome</keyword>
<keyword id="KW-0862">Zinc</keyword>
<organism>
    <name type="scientific">Cronobacter sakazakii (strain ATCC BAA-894)</name>
    <name type="common">Enterobacter sakazakii</name>
    <dbReference type="NCBI Taxonomy" id="290339"/>
    <lineage>
        <taxon>Bacteria</taxon>
        <taxon>Pseudomonadati</taxon>
        <taxon>Pseudomonadota</taxon>
        <taxon>Gammaproteobacteria</taxon>
        <taxon>Enterobacterales</taxon>
        <taxon>Enterobacteriaceae</taxon>
        <taxon>Cronobacter</taxon>
    </lineage>
</organism>
<name>YACG_CROS8</name>
<feature type="chain" id="PRO_1000056973" description="DNA gyrase inhibitor YacG">
    <location>
        <begin position="1"/>
        <end position="67"/>
    </location>
</feature>
<feature type="region of interest" description="Disordered" evidence="2">
    <location>
        <begin position="44"/>
        <end position="67"/>
    </location>
</feature>
<feature type="compositionally biased region" description="Basic and acidic residues" evidence="2">
    <location>
        <begin position="44"/>
        <end position="57"/>
    </location>
</feature>
<feature type="binding site" evidence="1">
    <location>
        <position position="10"/>
    </location>
    <ligand>
        <name>Zn(2+)</name>
        <dbReference type="ChEBI" id="CHEBI:29105"/>
    </ligand>
</feature>
<feature type="binding site" evidence="1">
    <location>
        <position position="13"/>
    </location>
    <ligand>
        <name>Zn(2+)</name>
        <dbReference type="ChEBI" id="CHEBI:29105"/>
    </ligand>
</feature>
<feature type="binding site" evidence="1">
    <location>
        <position position="29"/>
    </location>
    <ligand>
        <name>Zn(2+)</name>
        <dbReference type="ChEBI" id="CHEBI:29105"/>
    </ligand>
</feature>
<feature type="binding site" evidence="1">
    <location>
        <position position="33"/>
    </location>
    <ligand>
        <name>Zn(2+)</name>
        <dbReference type="ChEBI" id="CHEBI:29105"/>
    </ligand>
</feature>
<comment type="function">
    <text evidence="1">Inhibits all the catalytic activities of DNA gyrase by preventing its interaction with DNA. Acts by binding directly to the C-terminal domain of GyrB, which probably disrupts DNA binding by the gyrase.</text>
</comment>
<comment type="cofactor">
    <cofactor evidence="1">
        <name>Zn(2+)</name>
        <dbReference type="ChEBI" id="CHEBI:29105"/>
    </cofactor>
    <text evidence="1">Binds 1 zinc ion.</text>
</comment>
<comment type="subunit">
    <text evidence="1">Interacts with GyrB.</text>
</comment>
<comment type="similarity">
    <text evidence="1">Belongs to the DNA gyrase inhibitor YacG family.</text>
</comment>
<protein>
    <recommendedName>
        <fullName evidence="1">DNA gyrase inhibitor YacG</fullName>
    </recommendedName>
</protein>